<evidence type="ECO:0000250" key="1">
    <source>
        <dbReference type="UniProtKB" id="Q7XJJ7"/>
    </source>
</evidence>
<evidence type="ECO:0000269" key="2">
    <source>
    </source>
</evidence>
<evidence type="ECO:0000303" key="3">
    <source>
    </source>
</evidence>
<evidence type="ECO:0000305" key="4"/>
<evidence type="ECO:0000305" key="5">
    <source>
    </source>
</evidence>
<evidence type="ECO:0000312" key="6">
    <source>
        <dbReference type="EMBL" id="BAS87513.1"/>
    </source>
</evidence>
<evidence type="ECO:0000312" key="7">
    <source>
        <dbReference type="EMBL" id="CAE01584.2"/>
    </source>
</evidence>
<evidence type="ECO:0000312" key="8">
    <source>
        <dbReference type="EMBL" id="EEE60367.1"/>
    </source>
</evidence>
<name>FAAH_ORYSJ</name>
<reference key="1">
    <citation type="journal article" date="2006" name="Biochim. Biophys. Acta">
        <title>Plant fatty acid (ethanol) amide hydrolases.</title>
        <authorList>
            <person name="Shrestha R."/>
            <person name="Kim S.C."/>
            <person name="Dyer J.M."/>
            <person name="Dixon R.A."/>
            <person name="Chapman K.D."/>
        </authorList>
    </citation>
    <scope>NUCLEOTIDE SEQUENCE [MRNA]</scope>
    <scope>FUNCTION</scope>
    <scope>CATALYTIC ACTIVITY</scope>
    <scope>ACTIVITY REGULATION</scope>
    <scope>BIOPHYSICOCHEMICAL PROPERTIES</scope>
</reference>
<reference key="2">
    <citation type="journal article" date="2002" name="Nature">
        <title>Sequence and analysis of rice chromosome 4.</title>
        <authorList>
            <person name="Feng Q."/>
            <person name="Zhang Y."/>
            <person name="Hao P."/>
            <person name="Wang S."/>
            <person name="Fu G."/>
            <person name="Huang Y."/>
            <person name="Li Y."/>
            <person name="Zhu J."/>
            <person name="Liu Y."/>
            <person name="Hu X."/>
            <person name="Jia P."/>
            <person name="Zhang Y."/>
            <person name="Zhao Q."/>
            <person name="Ying K."/>
            <person name="Yu S."/>
            <person name="Tang Y."/>
            <person name="Weng Q."/>
            <person name="Zhang L."/>
            <person name="Lu Y."/>
            <person name="Mu J."/>
            <person name="Lu Y."/>
            <person name="Zhang L.S."/>
            <person name="Yu Z."/>
            <person name="Fan D."/>
            <person name="Liu X."/>
            <person name="Lu T."/>
            <person name="Li C."/>
            <person name="Wu Y."/>
            <person name="Sun T."/>
            <person name="Lei H."/>
            <person name="Li T."/>
            <person name="Hu H."/>
            <person name="Guan J."/>
            <person name="Wu M."/>
            <person name="Zhang R."/>
            <person name="Zhou B."/>
            <person name="Chen Z."/>
            <person name="Chen L."/>
            <person name="Jin Z."/>
            <person name="Wang R."/>
            <person name="Yin H."/>
            <person name="Cai Z."/>
            <person name="Ren S."/>
            <person name="Lv G."/>
            <person name="Gu W."/>
            <person name="Zhu G."/>
            <person name="Tu Y."/>
            <person name="Jia J."/>
            <person name="Zhang Y."/>
            <person name="Chen J."/>
            <person name="Kang H."/>
            <person name="Chen X."/>
            <person name="Shao C."/>
            <person name="Sun Y."/>
            <person name="Hu Q."/>
            <person name="Zhang X."/>
            <person name="Zhang W."/>
            <person name="Wang L."/>
            <person name="Ding C."/>
            <person name="Sheng H."/>
            <person name="Gu J."/>
            <person name="Chen S."/>
            <person name="Ni L."/>
            <person name="Zhu F."/>
            <person name="Chen W."/>
            <person name="Lan L."/>
            <person name="Lai Y."/>
            <person name="Cheng Z."/>
            <person name="Gu M."/>
            <person name="Jiang J."/>
            <person name="Li J."/>
            <person name="Hong G."/>
            <person name="Xue Y."/>
            <person name="Han B."/>
        </authorList>
    </citation>
    <scope>NUCLEOTIDE SEQUENCE [LARGE SCALE GENOMIC DNA]</scope>
    <source>
        <strain>cv. Nipponbare</strain>
    </source>
</reference>
<reference key="3">
    <citation type="journal article" date="2005" name="Nature">
        <title>The map-based sequence of the rice genome.</title>
        <authorList>
            <consortium name="International rice genome sequencing project (IRGSP)"/>
        </authorList>
    </citation>
    <scope>NUCLEOTIDE SEQUENCE [LARGE SCALE GENOMIC DNA]</scope>
    <source>
        <strain>cv. Nipponbare</strain>
    </source>
</reference>
<reference key="4">
    <citation type="journal article" date="2008" name="Nucleic Acids Res.">
        <title>The rice annotation project database (RAP-DB): 2008 update.</title>
        <authorList>
            <consortium name="The rice annotation project (RAP)"/>
        </authorList>
    </citation>
    <scope>GENOME REANNOTATION</scope>
    <source>
        <strain>cv. Nipponbare</strain>
    </source>
</reference>
<reference key="5">
    <citation type="journal article" date="2013" name="Rice">
        <title>Improvement of the Oryza sativa Nipponbare reference genome using next generation sequence and optical map data.</title>
        <authorList>
            <person name="Kawahara Y."/>
            <person name="de la Bastide M."/>
            <person name="Hamilton J.P."/>
            <person name="Kanamori H."/>
            <person name="McCombie W.R."/>
            <person name="Ouyang S."/>
            <person name="Schwartz D.C."/>
            <person name="Tanaka T."/>
            <person name="Wu J."/>
            <person name="Zhou S."/>
            <person name="Childs K.L."/>
            <person name="Davidson R.M."/>
            <person name="Lin H."/>
            <person name="Quesada-Ocampo L."/>
            <person name="Vaillancourt B."/>
            <person name="Sakai H."/>
            <person name="Lee S.S."/>
            <person name="Kim J."/>
            <person name="Numa H."/>
            <person name="Itoh T."/>
            <person name="Buell C.R."/>
            <person name="Matsumoto T."/>
        </authorList>
    </citation>
    <scope>GENOME REANNOTATION</scope>
    <source>
        <strain>cv. Nipponbare</strain>
    </source>
</reference>
<reference key="6">
    <citation type="journal article" date="2005" name="PLoS Biol.">
        <title>The genomes of Oryza sativa: a history of duplications.</title>
        <authorList>
            <person name="Yu J."/>
            <person name="Wang J."/>
            <person name="Lin W."/>
            <person name="Li S."/>
            <person name="Li H."/>
            <person name="Zhou J."/>
            <person name="Ni P."/>
            <person name="Dong W."/>
            <person name="Hu S."/>
            <person name="Zeng C."/>
            <person name="Zhang J."/>
            <person name="Zhang Y."/>
            <person name="Li R."/>
            <person name="Xu Z."/>
            <person name="Li S."/>
            <person name="Li X."/>
            <person name="Zheng H."/>
            <person name="Cong L."/>
            <person name="Lin L."/>
            <person name="Yin J."/>
            <person name="Geng J."/>
            <person name="Li G."/>
            <person name="Shi J."/>
            <person name="Liu J."/>
            <person name="Lv H."/>
            <person name="Li J."/>
            <person name="Wang J."/>
            <person name="Deng Y."/>
            <person name="Ran L."/>
            <person name="Shi X."/>
            <person name="Wang X."/>
            <person name="Wu Q."/>
            <person name="Li C."/>
            <person name="Ren X."/>
            <person name="Wang J."/>
            <person name="Wang X."/>
            <person name="Li D."/>
            <person name="Liu D."/>
            <person name="Zhang X."/>
            <person name="Ji Z."/>
            <person name="Zhao W."/>
            <person name="Sun Y."/>
            <person name="Zhang Z."/>
            <person name="Bao J."/>
            <person name="Han Y."/>
            <person name="Dong L."/>
            <person name="Ji J."/>
            <person name="Chen P."/>
            <person name="Wu S."/>
            <person name="Liu J."/>
            <person name="Xiao Y."/>
            <person name="Bu D."/>
            <person name="Tan J."/>
            <person name="Yang L."/>
            <person name="Ye C."/>
            <person name="Zhang J."/>
            <person name="Xu J."/>
            <person name="Zhou Y."/>
            <person name="Yu Y."/>
            <person name="Zhang B."/>
            <person name="Zhuang S."/>
            <person name="Wei H."/>
            <person name="Liu B."/>
            <person name="Lei M."/>
            <person name="Yu H."/>
            <person name="Li Y."/>
            <person name="Xu H."/>
            <person name="Wei S."/>
            <person name="He X."/>
            <person name="Fang L."/>
            <person name="Zhang Z."/>
            <person name="Zhang Y."/>
            <person name="Huang X."/>
            <person name="Su Z."/>
            <person name="Tong W."/>
            <person name="Li J."/>
            <person name="Tong Z."/>
            <person name="Li S."/>
            <person name="Ye J."/>
            <person name="Wang L."/>
            <person name="Fang L."/>
            <person name="Lei T."/>
            <person name="Chen C.-S."/>
            <person name="Chen H.-C."/>
            <person name="Xu Z."/>
            <person name="Li H."/>
            <person name="Huang H."/>
            <person name="Zhang F."/>
            <person name="Xu H."/>
            <person name="Li N."/>
            <person name="Zhao C."/>
            <person name="Li S."/>
            <person name="Dong L."/>
            <person name="Huang Y."/>
            <person name="Li L."/>
            <person name="Xi Y."/>
            <person name="Qi Q."/>
            <person name="Li W."/>
            <person name="Zhang B."/>
            <person name="Hu W."/>
            <person name="Zhang Y."/>
            <person name="Tian X."/>
            <person name="Jiao Y."/>
            <person name="Liang X."/>
            <person name="Jin J."/>
            <person name="Gao L."/>
            <person name="Zheng W."/>
            <person name="Hao B."/>
            <person name="Liu S.-M."/>
            <person name="Wang W."/>
            <person name="Yuan L."/>
            <person name="Cao M."/>
            <person name="McDermott J."/>
            <person name="Samudrala R."/>
            <person name="Wang J."/>
            <person name="Wong G.K.-S."/>
            <person name="Yang H."/>
        </authorList>
    </citation>
    <scope>NUCLEOTIDE SEQUENCE [LARGE SCALE GENOMIC DNA]</scope>
    <source>
        <strain>cv. Nipponbare</strain>
    </source>
</reference>
<dbReference type="EC" id="3.5.1.-" evidence="2"/>
<dbReference type="EMBL" id="DQ118178">
    <property type="protein sequence ID" value="AAZ94202.1"/>
    <property type="status" value="ALT_INIT"/>
    <property type="molecule type" value="mRNA"/>
</dbReference>
<dbReference type="EMBL" id="AL606442">
    <property type="protein sequence ID" value="CAE01584.2"/>
    <property type="status" value="ALT_INIT"/>
    <property type="molecule type" value="Genomic_DNA"/>
</dbReference>
<dbReference type="EMBL" id="AP008210">
    <property type="protein sequence ID" value="BAF13910.1"/>
    <property type="molecule type" value="Genomic_DNA"/>
</dbReference>
<dbReference type="EMBL" id="AP014960">
    <property type="protein sequence ID" value="BAS87513.1"/>
    <property type="molecule type" value="Genomic_DNA"/>
</dbReference>
<dbReference type="EMBL" id="CM000141">
    <property type="protein sequence ID" value="EEE60367.1"/>
    <property type="status" value="ALT_INIT"/>
    <property type="molecule type" value="Genomic_DNA"/>
</dbReference>
<dbReference type="SMR" id="Q0JFH7"/>
<dbReference type="FunCoup" id="Q0JFH7">
    <property type="interactions" value="818"/>
</dbReference>
<dbReference type="STRING" id="39947.Q0JFH7"/>
<dbReference type="PaxDb" id="39947-Q0JFH7"/>
<dbReference type="EnsemblPlants" id="Os04t0102700-01">
    <property type="protein sequence ID" value="Os04t0102700-01"/>
    <property type="gene ID" value="Os04g0102700"/>
</dbReference>
<dbReference type="Gramene" id="Os04t0102700-01">
    <property type="protein sequence ID" value="Os04t0102700-01"/>
    <property type="gene ID" value="Os04g0102700"/>
</dbReference>
<dbReference type="KEGG" id="dosa:Os04g0102700"/>
<dbReference type="KEGG" id="osa:4334893"/>
<dbReference type="eggNOG" id="KOG1211">
    <property type="taxonomic scope" value="Eukaryota"/>
</dbReference>
<dbReference type="HOGENOM" id="CLU_009600_0_2_1"/>
<dbReference type="InParanoid" id="Q0JFH7"/>
<dbReference type="OMA" id="PGWHIDG"/>
<dbReference type="OrthoDB" id="421993at2759"/>
<dbReference type="Proteomes" id="UP000000763">
    <property type="component" value="Chromosome 4"/>
</dbReference>
<dbReference type="Proteomes" id="UP000007752">
    <property type="component" value="Chromosome 4"/>
</dbReference>
<dbReference type="Proteomes" id="UP000059680">
    <property type="component" value="Chromosome 4"/>
</dbReference>
<dbReference type="GO" id="GO:0005789">
    <property type="term" value="C:endoplasmic reticulum membrane"/>
    <property type="evidence" value="ECO:0007669"/>
    <property type="project" value="UniProtKB-SubCell"/>
</dbReference>
<dbReference type="GO" id="GO:0016020">
    <property type="term" value="C:membrane"/>
    <property type="evidence" value="ECO:0000318"/>
    <property type="project" value="GO_Central"/>
</dbReference>
<dbReference type="GO" id="GO:0005886">
    <property type="term" value="C:plasma membrane"/>
    <property type="evidence" value="ECO:0007669"/>
    <property type="project" value="UniProtKB-SubCell"/>
</dbReference>
<dbReference type="GO" id="GO:0047412">
    <property type="term" value="F:N-(long-chain-acyl)ethanolamine deacylase activity"/>
    <property type="evidence" value="ECO:0000314"/>
    <property type="project" value="UniProtKB"/>
</dbReference>
<dbReference type="GO" id="GO:0042742">
    <property type="term" value="P:defense response to bacterium"/>
    <property type="evidence" value="ECO:0007669"/>
    <property type="project" value="EnsemblPlants"/>
</dbReference>
<dbReference type="GO" id="GO:0016042">
    <property type="term" value="P:lipid catabolic process"/>
    <property type="evidence" value="ECO:0007669"/>
    <property type="project" value="UniProtKB-KW"/>
</dbReference>
<dbReference type="GO" id="GO:0070291">
    <property type="term" value="P:N-acylethanolamine metabolic process"/>
    <property type="evidence" value="ECO:0000314"/>
    <property type="project" value="UniProtKB"/>
</dbReference>
<dbReference type="Gene3D" id="3.90.1300.10">
    <property type="entry name" value="Amidase signature (AS) domain"/>
    <property type="match status" value="1"/>
</dbReference>
<dbReference type="InterPro" id="IPR000120">
    <property type="entry name" value="Amidase"/>
</dbReference>
<dbReference type="InterPro" id="IPR020556">
    <property type="entry name" value="Amidase_CS"/>
</dbReference>
<dbReference type="InterPro" id="IPR023631">
    <property type="entry name" value="Amidase_dom"/>
</dbReference>
<dbReference type="InterPro" id="IPR036928">
    <property type="entry name" value="AS_sf"/>
</dbReference>
<dbReference type="PANTHER" id="PTHR11895:SF156">
    <property type="entry name" value="FATTY ACID AMIDE HYDROLASE"/>
    <property type="match status" value="1"/>
</dbReference>
<dbReference type="PANTHER" id="PTHR11895">
    <property type="entry name" value="TRANSAMIDASE"/>
    <property type="match status" value="1"/>
</dbReference>
<dbReference type="Pfam" id="PF01425">
    <property type="entry name" value="Amidase"/>
    <property type="match status" value="1"/>
</dbReference>
<dbReference type="SUPFAM" id="SSF75304">
    <property type="entry name" value="Amidase signature (AS) enzymes"/>
    <property type="match status" value="1"/>
</dbReference>
<dbReference type="PROSITE" id="PS00571">
    <property type="entry name" value="AMIDASES"/>
    <property type="match status" value="1"/>
</dbReference>
<sequence length="608" mass="66547">MGKPPRAMTPVEEVDLSAVRYQSPSLQAPHLTGFSLRAFVWLMESPLFGRLLTSVLKSQNNITRMLQDTVIPERPMYLPEYPPQEPEQGVLLLGDDRDPVDRVEEALHCLPPYDPSLRWPAGDKPPFLYWKIRDFAHAYRSGITTPSVVAEHIIAGVEEWSNKKPPMPMLVYFNADDLRKQAEASTKRFQQGNPISILDGIFIAIKDDIDCFPYPSKGATTFFDKIRSVEKDAVCVARLRKCGVLFIGKANMHELGLGVTGNNPNYGTARNPHSIDRYTGGSSSGPAALVSSGLCSAAIGTDGGGSVRIPSSLCGIIGLKTTYGRTDMTGALCDCGTVEVASPLAASVEDALLVYSAIAGSRPMDKLTLRPSPLCVPNLVSPDNNNILGSVKIGKYTEWFHDVSDRDISNTCEDALNLLCSSFGCQIEEIILPELEEMRTAHVVSIGTESFCDLNPHYRAGKRTEFTLDTRTSLALFGSFTSTDYVASQRIRRRIMYYHNEAFKKVDVIATPTTGITAPEIPQSSLKLGESNYVVSAYLMRFVIAGNLLGLPAITVPVGHDKQGLPIGLQLIGRPWGEASLLRVASAIEELCLQKRKRPSAFHDILNA</sequence>
<proteinExistence type="evidence at protein level"/>
<accession>Q0JFH7</accession>
<accession>A0A0N7KIG0</accession>
<accession>Q15KE3</accession>
<accession>Q7XTB3</accession>
<keyword id="KW-1003">Cell membrane</keyword>
<keyword id="KW-0256">Endoplasmic reticulum</keyword>
<keyword id="KW-0378">Hydrolase</keyword>
<keyword id="KW-0442">Lipid degradation</keyword>
<keyword id="KW-0443">Lipid metabolism</keyword>
<keyword id="KW-0472">Membrane</keyword>
<keyword id="KW-1185">Reference proteome</keyword>
<comment type="function">
    <text evidence="2 5">Catalyzes the hydrolysis of bioactive endogenous fatty acid amides to their corresponding acids (PubMed:16624618). The hydrolysis of endogenous amidated lipids terminates their participation as lipid mediators in various signaling systems (Probable). Converts a wide range of N-acylethanolamines (NAEs) to their corresponding free fatty acids and ethanolamine (PubMed:16624618).</text>
</comment>
<comment type="catalytic activity">
    <reaction evidence="2">
        <text>N-(9Z,12Z-octadecadienoyl)-ethanolamine + H2O = ethanolamine + (9Z,12Z)-octadecadienoate</text>
        <dbReference type="Rhea" id="RHEA:35567"/>
        <dbReference type="ChEBI" id="CHEBI:15377"/>
        <dbReference type="ChEBI" id="CHEBI:30245"/>
        <dbReference type="ChEBI" id="CHEBI:57603"/>
        <dbReference type="ChEBI" id="CHEBI:64032"/>
    </reaction>
    <physiologicalReaction direction="left-to-right" evidence="2">
        <dbReference type="Rhea" id="RHEA:35568"/>
    </physiologicalReaction>
</comment>
<comment type="catalytic activity">
    <reaction evidence="2">
        <text>N-hexadecanoylethanolamine + H2O = ethanolamine + hexadecanoate</text>
        <dbReference type="Rhea" id="RHEA:45064"/>
        <dbReference type="ChEBI" id="CHEBI:7896"/>
        <dbReference type="ChEBI" id="CHEBI:15377"/>
        <dbReference type="ChEBI" id="CHEBI:57603"/>
        <dbReference type="ChEBI" id="CHEBI:71464"/>
    </reaction>
    <physiologicalReaction direction="left-to-right" evidence="2">
        <dbReference type="Rhea" id="RHEA:45065"/>
    </physiologicalReaction>
</comment>
<comment type="catalytic activity">
    <reaction evidence="2">
        <text>N-dodecanoylethanolamine + H2O = dodecanoate + ethanolamine</text>
        <dbReference type="Rhea" id="RHEA:45456"/>
        <dbReference type="ChEBI" id="CHEBI:15377"/>
        <dbReference type="ChEBI" id="CHEBI:18262"/>
        <dbReference type="ChEBI" id="CHEBI:57603"/>
        <dbReference type="ChEBI" id="CHEBI:85263"/>
    </reaction>
    <physiologicalReaction direction="left-to-right" evidence="2">
        <dbReference type="Rhea" id="RHEA:45457"/>
    </physiologicalReaction>
</comment>
<comment type="activity regulation">
    <text evidence="2">Inhibited by methyl arachidonyl fluorophosphonate (MAFP).</text>
</comment>
<comment type="biophysicochemical properties">
    <kinetics>
        <KM evidence="2">30 uM for N-acylethanolamine 18:2</KM>
        <KM evidence="2">24 uM for N-acylethanolamine 16:0</KM>
        <KM evidence="2">68 uM for N-acylethanolamine 12:0</KM>
    </kinetics>
</comment>
<comment type="subunit">
    <text evidence="1">Forms homodimers.</text>
</comment>
<comment type="subcellular location">
    <subcellularLocation>
        <location evidence="1">Endoplasmic reticulum membrane</location>
    </subcellularLocation>
    <subcellularLocation>
        <location evidence="1">Cell membrane</location>
    </subcellularLocation>
</comment>
<comment type="similarity">
    <text evidence="4">Belongs to the amidase family.</text>
</comment>
<comment type="sequence caution" evidence="4">
    <conflict type="erroneous initiation">
        <sequence resource="EMBL-CDS" id="AAZ94202"/>
    </conflict>
    <text>Truncated N-terminus.</text>
</comment>
<comment type="sequence caution" evidence="4">
    <conflict type="erroneous initiation">
        <sequence resource="EMBL-CDS" id="CAE01584"/>
    </conflict>
    <text>Truncated N-terminus.</text>
</comment>
<comment type="sequence caution" evidence="4">
    <conflict type="erroneous initiation">
        <sequence resource="EMBL-CDS" id="EEE60367"/>
    </conflict>
    <text>Truncated N-terminus.</text>
</comment>
<protein>
    <recommendedName>
        <fullName evidence="3">Fatty acid amide hydrolase</fullName>
        <ecNumber evidence="2">3.5.1.-</ecNumber>
    </recommendedName>
    <alternativeName>
        <fullName evidence="3">N-acylethanolamine amidohydrolase</fullName>
    </alternativeName>
</protein>
<organism>
    <name type="scientific">Oryza sativa subsp. japonica</name>
    <name type="common">Rice</name>
    <dbReference type="NCBI Taxonomy" id="39947"/>
    <lineage>
        <taxon>Eukaryota</taxon>
        <taxon>Viridiplantae</taxon>
        <taxon>Streptophyta</taxon>
        <taxon>Embryophyta</taxon>
        <taxon>Tracheophyta</taxon>
        <taxon>Spermatophyta</taxon>
        <taxon>Magnoliopsida</taxon>
        <taxon>Liliopsida</taxon>
        <taxon>Poales</taxon>
        <taxon>Poaceae</taxon>
        <taxon>BOP clade</taxon>
        <taxon>Oryzoideae</taxon>
        <taxon>Oryzeae</taxon>
        <taxon>Oryzinae</taxon>
        <taxon>Oryza</taxon>
        <taxon>Oryza sativa</taxon>
    </lineage>
</organism>
<feature type="chain" id="PRO_0000451042" description="Fatty acid amide hydrolase">
    <location>
        <begin position="1"/>
        <end position="608"/>
    </location>
</feature>
<feature type="active site" description="Charge relay system" evidence="1">
    <location>
        <position position="206"/>
    </location>
</feature>
<feature type="active site" description="Charge relay system" evidence="1">
    <location>
        <position position="282"/>
    </location>
</feature>
<feature type="active site" description="Acyl-ester intermediate" evidence="1">
    <location>
        <position position="306"/>
    </location>
</feature>
<feature type="binding site" evidence="1">
    <location>
        <begin position="303"/>
        <end position="306"/>
    </location>
    <ligand>
        <name>substrate</name>
    </ligand>
</feature>
<gene>
    <name evidence="3" type="primary">FAAH</name>
    <name evidence="6" type="ordered locus">Os04g0102700</name>
    <name evidence="8" type="ORF">OsJ_13498</name>
    <name evidence="7" type="ORF">OSJNBa0068L06.10</name>
</gene>